<feature type="chain" id="PRO_1000023214" description="Thymidylate kinase">
    <location>
        <begin position="1"/>
        <end position="212"/>
    </location>
</feature>
<feature type="binding site" evidence="1">
    <location>
        <begin position="13"/>
        <end position="20"/>
    </location>
    <ligand>
        <name>ATP</name>
        <dbReference type="ChEBI" id="CHEBI:30616"/>
    </ligand>
</feature>
<sequence>MSSLTGKLIVIEGLEGAGKSTAVNLVVELLSQKKISTITTREPGGTRIGEILRSIIKNPEYNNVLDDRSELLLLYAARIQLIEQVIKPALNEGQWVIADRFELSTLAYQGGGRKMDMRVINELSNFCLKGFKPDLTLYLDINPELGMIRAKSRGKFDRIEQESIEFFHRIHDTYHILVKQNPEIMMIDANRPLEDVQSSIQSVIEEFIEHNL</sequence>
<protein>
    <recommendedName>
        <fullName evidence="1">Thymidylate kinase</fullName>
        <ecNumber evidence="1">2.7.4.9</ecNumber>
    </recommendedName>
    <alternativeName>
        <fullName evidence="1">dTMP kinase</fullName>
    </alternativeName>
</protein>
<comment type="function">
    <text evidence="1">Phosphorylation of dTMP to form dTDP in both de novo and salvage pathways of dTTP synthesis.</text>
</comment>
<comment type="catalytic activity">
    <reaction evidence="1">
        <text>dTMP + ATP = dTDP + ADP</text>
        <dbReference type="Rhea" id="RHEA:13517"/>
        <dbReference type="ChEBI" id="CHEBI:30616"/>
        <dbReference type="ChEBI" id="CHEBI:58369"/>
        <dbReference type="ChEBI" id="CHEBI:63528"/>
        <dbReference type="ChEBI" id="CHEBI:456216"/>
        <dbReference type="EC" id="2.7.4.9"/>
    </reaction>
</comment>
<comment type="similarity">
    <text evidence="1">Belongs to the thymidylate kinase family.</text>
</comment>
<accession>A5IBP1</accession>
<organism>
    <name type="scientific">Legionella pneumophila (strain Corby)</name>
    <dbReference type="NCBI Taxonomy" id="400673"/>
    <lineage>
        <taxon>Bacteria</taxon>
        <taxon>Pseudomonadati</taxon>
        <taxon>Pseudomonadota</taxon>
        <taxon>Gammaproteobacteria</taxon>
        <taxon>Legionellales</taxon>
        <taxon>Legionellaceae</taxon>
        <taxon>Legionella</taxon>
    </lineage>
</organism>
<proteinExistence type="inferred from homology"/>
<evidence type="ECO:0000255" key="1">
    <source>
        <dbReference type="HAMAP-Rule" id="MF_00165"/>
    </source>
</evidence>
<name>KTHY_LEGPC</name>
<dbReference type="EC" id="2.7.4.9" evidence="1"/>
<dbReference type="EMBL" id="CP000675">
    <property type="protein sequence ID" value="ABQ54791.1"/>
    <property type="molecule type" value="Genomic_DNA"/>
</dbReference>
<dbReference type="RefSeq" id="WP_011946416.1">
    <property type="nucleotide sequence ID" value="NZ_JAPMSS010000002.1"/>
</dbReference>
<dbReference type="SMR" id="A5IBP1"/>
<dbReference type="KEGG" id="lpc:LPC_0815"/>
<dbReference type="HOGENOM" id="CLU_049131_0_1_6"/>
<dbReference type="GO" id="GO:0005829">
    <property type="term" value="C:cytosol"/>
    <property type="evidence" value="ECO:0007669"/>
    <property type="project" value="TreeGrafter"/>
</dbReference>
<dbReference type="GO" id="GO:0005524">
    <property type="term" value="F:ATP binding"/>
    <property type="evidence" value="ECO:0007669"/>
    <property type="project" value="UniProtKB-UniRule"/>
</dbReference>
<dbReference type="GO" id="GO:0004798">
    <property type="term" value="F:dTMP kinase activity"/>
    <property type="evidence" value="ECO:0007669"/>
    <property type="project" value="UniProtKB-UniRule"/>
</dbReference>
<dbReference type="GO" id="GO:0006233">
    <property type="term" value="P:dTDP biosynthetic process"/>
    <property type="evidence" value="ECO:0007669"/>
    <property type="project" value="InterPro"/>
</dbReference>
<dbReference type="GO" id="GO:0006235">
    <property type="term" value="P:dTTP biosynthetic process"/>
    <property type="evidence" value="ECO:0007669"/>
    <property type="project" value="UniProtKB-UniRule"/>
</dbReference>
<dbReference type="GO" id="GO:0006227">
    <property type="term" value="P:dUDP biosynthetic process"/>
    <property type="evidence" value="ECO:0007669"/>
    <property type="project" value="TreeGrafter"/>
</dbReference>
<dbReference type="CDD" id="cd01672">
    <property type="entry name" value="TMPK"/>
    <property type="match status" value="1"/>
</dbReference>
<dbReference type="FunFam" id="3.40.50.300:FF:000225">
    <property type="entry name" value="Thymidylate kinase"/>
    <property type="match status" value="1"/>
</dbReference>
<dbReference type="Gene3D" id="3.40.50.300">
    <property type="entry name" value="P-loop containing nucleotide triphosphate hydrolases"/>
    <property type="match status" value="1"/>
</dbReference>
<dbReference type="HAMAP" id="MF_00165">
    <property type="entry name" value="Thymidylate_kinase"/>
    <property type="match status" value="1"/>
</dbReference>
<dbReference type="InterPro" id="IPR027417">
    <property type="entry name" value="P-loop_NTPase"/>
</dbReference>
<dbReference type="InterPro" id="IPR039430">
    <property type="entry name" value="Thymidylate_kin-like_dom"/>
</dbReference>
<dbReference type="InterPro" id="IPR018094">
    <property type="entry name" value="Thymidylate_kinase"/>
</dbReference>
<dbReference type="NCBIfam" id="TIGR00041">
    <property type="entry name" value="DTMP_kinase"/>
    <property type="match status" value="1"/>
</dbReference>
<dbReference type="PANTHER" id="PTHR10344">
    <property type="entry name" value="THYMIDYLATE KINASE"/>
    <property type="match status" value="1"/>
</dbReference>
<dbReference type="PANTHER" id="PTHR10344:SF4">
    <property type="entry name" value="UMP-CMP KINASE 2, MITOCHONDRIAL"/>
    <property type="match status" value="1"/>
</dbReference>
<dbReference type="Pfam" id="PF02223">
    <property type="entry name" value="Thymidylate_kin"/>
    <property type="match status" value="1"/>
</dbReference>
<dbReference type="SUPFAM" id="SSF52540">
    <property type="entry name" value="P-loop containing nucleoside triphosphate hydrolases"/>
    <property type="match status" value="1"/>
</dbReference>
<keyword id="KW-0067">ATP-binding</keyword>
<keyword id="KW-0418">Kinase</keyword>
<keyword id="KW-0545">Nucleotide biosynthesis</keyword>
<keyword id="KW-0547">Nucleotide-binding</keyword>
<keyword id="KW-0808">Transferase</keyword>
<gene>
    <name evidence="1" type="primary">tmk</name>
    <name type="ordered locus">LPC_0815</name>
</gene>
<reference key="1">
    <citation type="submission" date="2006-11" db="EMBL/GenBank/DDBJ databases">
        <title>Identification and characterization of a new conjugation/ type IVA secretion system (trb/tra) of L. pneumophila Corby localized on a mobile genomic island.</title>
        <authorList>
            <person name="Gloeckner G."/>
            <person name="Albert-Weissenberger C."/>
            <person name="Weinmann E."/>
            <person name="Jacobi S."/>
            <person name="Schunder E."/>
            <person name="Steinert M."/>
            <person name="Buchrieser C."/>
            <person name="Hacker J."/>
            <person name="Heuner K."/>
        </authorList>
    </citation>
    <scope>NUCLEOTIDE SEQUENCE [LARGE SCALE GENOMIC DNA]</scope>
    <source>
        <strain>Corby</strain>
    </source>
</reference>